<accession>Q8X0Z1</accession>
<organism>
    <name type="scientific">Fusarium fujikuroi</name>
    <name type="common">Bakanae and foot rot disease fungus</name>
    <name type="synonym">Gibberella fujikuroi</name>
    <dbReference type="NCBI Taxonomy" id="5127"/>
    <lineage>
        <taxon>Eukaryota</taxon>
        <taxon>Fungi</taxon>
        <taxon>Dikarya</taxon>
        <taxon>Ascomycota</taxon>
        <taxon>Pezizomycotina</taxon>
        <taxon>Sordariomycetes</taxon>
        <taxon>Hypocreomycetidae</taxon>
        <taxon>Hypocreales</taxon>
        <taxon>Nectriaceae</taxon>
        <taxon>Fusarium</taxon>
        <taxon>Fusarium fujikuroi species complex</taxon>
    </lineage>
</organism>
<reference key="1">
    <citation type="journal article" date="2002" name="Mol. Genet. Genomics">
        <title>A carotenoid biosynthesis gene cluster in Fusarium fujikuroi: the genes carB and carRA.</title>
        <authorList>
            <person name="Linnemannstons P."/>
            <person name="Prado M.M."/>
            <person name="Fernandez-Martin R."/>
            <person name="Tudzynski B."/>
            <person name="Avalos J."/>
        </authorList>
    </citation>
    <scope>NUCLEOTIDE SEQUENCE [GENOMIC DNA]</scope>
    <scope>FUNCTION</scope>
    <scope>CATALYTIC ACTIVITY</scope>
    <scope>INDUCTION</scope>
</reference>
<sequence>MGWEYAQVHLKYTIPFGVVLAAVYRPLMSRLDVFKLVFLITVSFFWVVKGLEANSCRLLLFLPCMLILRGVLLRLTNADSPWDSYLIKNRIWTYPPGVVVGLTAWDIPAEELFFFVIQTFNTSLLYMILSKPTFHPIYLSKKTGWGKIAGQILFASAIIFGLVSVSSGGEGMYMGLILIWACPFLLFLWSISYQFIVNLPWTNTALPIALPTLYLWVVDTFALRRGTWSITSGTKYGVVLWDGLEIEEAVFFLLTNTLIVFGLIACDNNLAILDTFPEHFPRTKGVPSLLTIIRTLILPKEKYDEERIQGLVSAVALLRKKSRSFYLASGTFEGRLRIDLIRLYAFCRAADDLVDEAPSVDDSRASIEKLRKFLDLAYEENQEEPSQRLREYVTSSIPEMFHMALLQLPTYYLPKQPLDDLLKGFDTDLLFDRKSGAFPIETTEDLDIYGSRVAGTVAELCNHLILYHTPEAVPEDIQREVVASGQEMGIALQYVNIARDIKTDAEIDRVYLPLSWLKEAQLTPEDVIQQPHGPTIEALRHKLLDRAFEKYNMAKGAIDKLPSEGKGPIRVAVESYMEIGRVLREKGPTMKKGRATVPKMRRIRVAWSALNK</sequence>
<protein>
    <recommendedName>
        <fullName evidence="3">Bifunctional lycopene cyclase/phytoene synthase</fullName>
    </recommendedName>
    <domain>
        <recommendedName>
            <fullName evidence="3">Lycopene beta-cyclase</fullName>
            <ecNumber evidence="2">5.5.1.19</ecNumber>
        </recommendedName>
        <alternativeName>
            <fullName evidence="3">Carotene cyclase</fullName>
        </alternativeName>
        <alternativeName>
            <fullName evidence="3">Lycopene cyclase</fullName>
        </alternativeName>
    </domain>
    <domain>
        <recommendedName>
            <fullName evidence="3">Phytoene synthase</fullName>
            <ecNumber evidence="2">2.5.1.32</ecNumber>
        </recommendedName>
    </domain>
</protein>
<name>LCPS_FUSFU</name>
<gene>
    <name evidence="3" type="primary">carRA</name>
</gene>
<feature type="chain" id="PRO_0000409236" description="Bifunctional lycopene cyclase/phytoene synthase">
    <location>
        <begin position="1"/>
        <end position="612"/>
    </location>
</feature>
<feature type="transmembrane region" description="Helical" evidence="1">
    <location>
        <begin position="3"/>
        <end position="23"/>
    </location>
</feature>
<feature type="transmembrane region" description="Helical" evidence="1">
    <location>
        <begin position="31"/>
        <end position="51"/>
    </location>
</feature>
<feature type="transmembrane region" description="Helical" evidence="1">
    <location>
        <begin position="112"/>
        <end position="130"/>
    </location>
</feature>
<feature type="transmembrane region" description="Helical" evidence="1">
    <location>
        <begin position="148"/>
        <end position="168"/>
    </location>
</feature>
<feature type="transmembrane region" description="Helical" evidence="1">
    <location>
        <begin position="171"/>
        <end position="191"/>
    </location>
</feature>
<feature type="transmembrane region" description="Helical" evidence="1">
    <location>
        <begin position="203"/>
        <end position="223"/>
    </location>
</feature>
<feature type="transmembrane region" description="Helical" evidence="1">
    <location>
        <begin position="246"/>
        <end position="266"/>
    </location>
</feature>
<feature type="region of interest" description="Lycopene beta-cyclase" evidence="5">
    <location>
        <begin position="1"/>
        <end position="268"/>
    </location>
</feature>
<feature type="region of interest" description="Phytoene synthase" evidence="5">
    <location>
        <begin position="275"/>
        <end position="612"/>
    </location>
</feature>
<evidence type="ECO:0000255" key="1"/>
<evidence type="ECO:0000269" key="2">
    <source>
    </source>
</evidence>
<evidence type="ECO:0000303" key="3">
    <source>
    </source>
</evidence>
<evidence type="ECO:0000305" key="4"/>
<evidence type="ECO:0000305" key="5">
    <source>
    </source>
</evidence>
<keyword id="KW-0125">Carotenoid biosynthesis</keyword>
<keyword id="KW-0413">Isomerase</keyword>
<keyword id="KW-0472">Membrane</keyword>
<keyword id="KW-0511">Multifunctional enzyme</keyword>
<keyword id="KW-0808">Transferase</keyword>
<keyword id="KW-0812">Transmembrane</keyword>
<keyword id="KW-1133">Transmembrane helix</keyword>
<proteinExistence type="evidence at protein level"/>
<comment type="function">
    <text evidence="2 5">Bifunctional enzyme; part of the car gene cluster that mediates the biosynthesis of neurosporaxanthin, a carboxylic apocarotenoid acting as an essential protective pigments and leading to orange pigmentation (PubMed:12172798). CarAR catalyzes the first step of the pathway by converting geranylgeranyl diphosphate to phytoene, as well as the later cyclization step that transforms the carB product lycopene into gamma-carotene (PubMed:12172798). CarAR also converts part of gamma-carotene into beta-carotene (PubMed:12172798). Neurosporaxanthin is synthesized from geranyl-geranyl pyrophosphate (GGPP) through several enzymatic activities. Phytoene synthase activity performed by the bifunctional enzyme carAR first produces phytoene from geranyl-geranyl pyrophosphate (GGPP). The phytoene dehydrogenase carB then introduces 4 desaturations to lead to lycopene which is substrate of the carotene cyclase activity of carAR that leads to the production of gamma-carotene. CarB then performs a 5th desaturation reaction to yield torulene. Torulene is the substrate of the dioxidase carT that breaks the molecule, removing five carbon atoms to yield beta-apo-4'-carotenal, whereas the aldehyde dehydrogenase carD mediates the last step by converting beta-apo-4'-carotenal into neurosporaxanthin (Probable).</text>
</comment>
<comment type="catalytic activity">
    <reaction evidence="2">
        <text>all-trans-lycopene = gamma-carotene</text>
        <dbReference type="Rhea" id="RHEA:32219"/>
        <dbReference type="ChEBI" id="CHEBI:15948"/>
        <dbReference type="ChEBI" id="CHEBI:27740"/>
        <dbReference type="EC" id="5.5.1.19"/>
    </reaction>
</comment>
<comment type="catalytic activity">
    <reaction evidence="2">
        <text>gamma-carotene = all-trans-beta-carotene</text>
        <dbReference type="Rhea" id="RHEA:32239"/>
        <dbReference type="ChEBI" id="CHEBI:17579"/>
        <dbReference type="ChEBI" id="CHEBI:27740"/>
        <dbReference type="EC" id="5.5.1.19"/>
    </reaction>
</comment>
<comment type="catalytic activity">
    <reaction evidence="2">
        <text>2 (2E,6E,10E)-geranylgeranyl diphosphate = 15-cis-phytoene + 2 diphosphate</text>
        <dbReference type="Rhea" id="RHEA:34475"/>
        <dbReference type="ChEBI" id="CHEBI:27787"/>
        <dbReference type="ChEBI" id="CHEBI:33019"/>
        <dbReference type="ChEBI" id="CHEBI:58756"/>
        <dbReference type="EC" id="2.5.1.32"/>
    </reaction>
</comment>
<comment type="pathway">
    <text evidence="2">Carotenoid biosynthesis; beta-carotene biosynthesis.</text>
</comment>
<comment type="pathway">
    <text evidence="2">Carotenoid biosynthesis; phytoene biosynthesis; all-trans-phytoene from geranylgeranyl diphosphate: step 1/1.</text>
</comment>
<comment type="subcellular location">
    <subcellularLocation>
        <location evidence="4">Membrane</location>
        <topology evidence="4">Multi-pass membrane protein</topology>
    </subcellularLocation>
</comment>
<comment type="induction">
    <text evidence="2">Induced by light.</text>
</comment>
<comment type="similarity">
    <text evidence="4">In the N-terminal section; belongs to the lycopene beta-cyclase family.</text>
</comment>
<comment type="similarity">
    <text evidence="4">In the C-terminal section; belongs to the phytoene/squalene synthase family.</text>
</comment>
<dbReference type="EC" id="5.5.1.19" evidence="2"/>
<dbReference type="EC" id="2.5.1.32" evidence="2"/>
<dbReference type="EMBL" id="AJ426417">
    <property type="protein sequence ID" value="CAD19988.1"/>
    <property type="molecule type" value="Genomic_DNA"/>
</dbReference>
<dbReference type="SMR" id="Q8X0Z1"/>
<dbReference type="eggNOG" id="KOG1459">
    <property type="taxonomic scope" value="Eukaryota"/>
</dbReference>
<dbReference type="UniPathway" id="UPA00799">
    <property type="reaction ID" value="UER00773"/>
</dbReference>
<dbReference type="UniPathway" id="UPA00802"/>
<dbReference type="GO" id="GO:0016020">
    <property type="term" value="C:membrane"/>
    <property type="evidence" value="ECO:0007669"/>
    <property type="project" value="UniProtKB-SubCell"/>
</dbReference>
<dbReference type="GO" id="GO:0046905">
    <property type="term" value="F:15-cis-phytoene synthase activity"/>
    <property type="evidence" value="ECO:0000315"/>
    <property type="project" value="UniProtKB"/>
</dbReference>
<dbReference type="GO" id="GO:0004311">
    <property type="term" value="F:geranylgeranyl diphosphate synthase activity"/>
    <property type="evidence" value="ECO:0007669"/>
    <property type="project" value="InterPro"/>
</dbReference>
<dbReference type="GO" id="GO:0016872">
    <property type="term" value="F:intramolecular lyase activity"/>
    <property type="evidence" value="ECO:0007669"/>
    <property type="project" value="InterPro"/>
</dbReference>
<dbReference type="GO" id="GO:0045436">
    <property type="term" value="F:lycopene beta cyclase activity"/>
    <property type="evidence" value="ECO:0000315"/>
    <property type="project" value="UniProtKB"/>
</dbReference>
<dbReference type="GO" id="GO:0051996">
    <property type="term" value="F:squalene synthase [NAD(P)H] activity"/>
    <property type="evidence" value="ECO:0007669"/>
    <property type="project" value="InterPro"/>
</dbReference>
<dbReference type="GO" id="GO:0016120">
    <property type="term" value="P:carotene biosynthetic process"/>
    <property type="evidence" value="ECO:0000315"/>
    <property type="project" value="UniProtKB"/>
</dbReference>
<dbReference type="GO" id="GO:0016117">
    <property type="term" value="P:carotenoid biosynthetic process"/>
    <property type="evidence" value="ECO:0007669"/>
    <property type="project" value="UniProtKB-KW"/>
</dbReference>
<dbReference type="CDD" id="cd00683">
    <property type="entry name" value="Trans_IPPS_HH"/>
    <property type="match status" value="1"/>
</dbReference>
<dbReference type="FunFam" id="1.10.600.10:FF:000018">
    <property type="entry name" value="Probable geranylgeranyl-diphosphate geranylgeranyltransferase (AL-2)"/>
    <property type="match status" value="1"/>
</dbReference>
<dbReference type="Gene3D" id="1.10.600.10">
    <property type="entry name" value="Farnesyl Diphosphate Synthase"/>
    <property type="match status" value="1"/>
</dbReference>
<dbReference type="InterPro" id="IPR008949">
    <property type="entry name" value="Isoprenoid_synthase_dom_sf"/>
</dbReference>
<dbReference type="InterPro" id="IPR017825">
    <property type="entry name" value="Lycopene_cyclase_dom"/>
</dbReference>
<dbReference type="InterPro" id="IPR002060">
    <property type="entry name" value="Squ/phyt_synthse"/>
</dbReference>
<dbReference type="InterPro" id="IPR019845">
    <property type="entry name" value="Squalene/phytoene_synthase_CS"/>
</dbReference>
<dbReference type="InterPro" id="IPR044843">
    <property type="entry name" value="Trans_IPPS_bact-type"/>
</dbReference>
<dbReference type="InterPro" id="IPR033904">
    <property type="entry name" value="Trans_IPPS_HH"/>
</dbReference>
<dbReference type="NCBIfam" id="TIGR03462">
    <property type="entry name" value="CarR_dom_SF"/>
    <property type="match status" value="2"/>
</dbReference>
<dbReference type="PANTHER" id="PTHR31480">
    <property type="entry name" value="BIFUNCTIONAL LYCOPENE CYCLASE/PHYTOENE SYNTHASE"/>
    <property type="match status" value="1"/>
</dbReference>
<dbReference type="Pfam" id="PF00494">
    <property type="entry name" value="SQS_PSY"/>
    <property type="match status" value="1"/>
</dbReference>
<dbReference type="SFLD" id="SFLDS00005">
    <property type="entry name" value="Isoprenoid_Synthase_Type_I"/>
    <property type="match status" value="1"/>
</dbReference>
<dbReference type="SFLD" id="SFLDG01212">
    <property type="entry name" value="Phytoene_synthase_like"/>
    <property type="match status" value="1"/>
</dbReference>
<dbReference type="SUPFAM" id="SSF48576">
    <property type="entry name" value="Terpenoid synthases"/>
    <property type="match status" value="1"/>
</dbReference>
<dbReference type="PROSITE" id="PS01045">
    <property type="entry name" value="SQUALEN_PHYTOEN_SYN_2"/>
    <property type="match status" value="1"/>
</dbReference>